<sequence>MNDPRKGADAEPTTHFGYQNVPESQKAKKVAEVFHSVAAKYDLMNDLMSGGIHRLWKRFTIELSGVRSGNRVLDIAGGTGDLTRQFSRLVGPTGEVVLADINASMLKVGRDKLLDKGVSGNVSFVQADAEKLPFPDNHFDCVTIAFGLRNVTHKDEAIRSMLRVLKPGGRLLVLEFSKPSSNLLSKAYDAYSFSLLPLMGKLVTNDSESYRYLAESIRMHPDQETLKAMMVEAGFDRVTYHNMTGGIVALHRGIKP</sequence>
<gene>
    <name evidence="1" type="primary">ubiE</name>
    <name type="ordered locus">PA14_66900</name>
</gene>
<dbReference type="EC" id="2.1.1.163" evidence="1"/>
<dbReference type="EC" id="2.1.1.201" evidence="1"/>
<dbReference type="EMBL" id="CP000438">
    <property type="protein sequence ID" value="ABJ14446.1"/>
    <property type="molecule type" value="Genomic_DNA"/>
</dbReference>
<dbReference type="RefSeq" id="WP_003103462.1">
    <property type="nucleotide sequence ID" value="NZ_CP034244.1"/>
</dbReference>
<dbReference type="SMR" id="Q02EV4"/>
<dbReference type="KEGG" id="pau:PA14_66900"/>
<dbReference type="PseudoCAP" id="PA14_66900"/>
<dbReference type="HOGENOM" id="CLU_037990_0_0_6"/>
<dbReference type="BioCyc" id="PAER208963:G1G74-5644-MONOMER"/>
<dbReference type="UniPathway" id="UPA00079">
    <property type="reaction ID" value="UER00169"/>
</dbReference>
<dbReference type="UniPathway" id="UPA00232"/>
<dbReference type="Proteomes" id="UP000000653">
    <property type="component" value="Chromosome"/>
</dbReference>
<dbReference type="GO" id="GO:0008425">
    <property type="term" value="F:2-methoxy-6-polyprenyl-1,4-benzoquinol methyltransferase activity"/>
    <property type="evidence" value="ECO:0007669"/>
    <property type="project" value="UniProtKB-UniRule"/>
</dbReference>
<dbReference type="GO" id="GO:0043770">
    <property type="term" value="F:demethylmenaquinone methyltransferase activity"/>
    <property type="evidence" value="ECO:0007669"/>
    <property type="project" value="UniProtKB-UniRule"/>
</dbReference>
<dbReference type="GO" id="GO:0009060">
    <property type="term" value="P:aerobic respiration"/>
    <property type="evidence" value="ECO:0007669"/>
    <property type="project" value="UniProtKB-UniRule"/>
</dbReference>
<dbReference type="GO" id="GO:0009234">
    <property type="term" value="P:menaquinone biosynthetic process"/>
    <property type="evidence" value="ECO:0007669"/>
    <property type="project" value="UniProtKB-UniRule"/>
</dbReference>
<dbReference type="GO" id="GO:0032259">
    <property type="term" value="P:methylation"/>
    <property type="evidence" value="ECO:0007669"/>
    <property type="project" value="UniProtKB-KW"/>
</dbReference>
<dbReference type="CDD" id="cd02440">
    <property type="entry name" value="AdoMet_MTases"/>
    <property type="match status" value="1"/>
</dbReference>
<dbReference type="FunFam" id="3.40.50.150:FF:000014">
    <property type="entry name" value="Ubiquinone/menaquinone biosynthesis C-methyltransferase UbiE"/>
    <property type="match status" value="1"/>
</dbReference>
<dbReference type="Gene3D" id="3.40.50.150">
    <property type="entry name" value="Vaccinia Virus protein VP39"/>
    <property type="match status" value="1"/>
</dbReference>
<dbReference type="HAMAP" id="MF_01813">
    <property type="entry name" value="MenG_UbiE_methyltr"/>
    <property type="match status" value="1"/>
</dbReference>
<dbReference type="InterPro" id="IPR029063">
    <property type="entry name" value="SAM-dependent_MTases_sf"/>
</dbReference>
<dbReference type="InterPro" id="IPR004033">
    <property type="entry name" value="UbiE/COQ5_MeTrFase"/>
</dbReference>
<dbReference type="InterPro" id="IPR023576">
    <property type="entry name" value="UbiE/COQ5_MeTrFase_CS"/>
</dbReference>
<dbReference type="NCBIfam" id="TIGR01934">
    <property type="entry name" value="MenG_MenH_UbiE"/>
    <property type="match status" value="1"/>
</dbReference>
<dbReference type="NCBIfam" id="NF001240">
    <property type="entry name" value="PRK00216.1-1"/>
    <property type="match status" value="1"/>
</dbReference>
<dbReference type="NCBIfam" id="NF001244">
    <property type="entry name" value="PRK00216.1-5"/>
    <property type="match status" value="1"/>
</dbReference>
<dbReference type="PANTHER" id="PTHR43591:SF24">
    <property type="entry name" value="2-METHOXY-6-POLYPRENYL-1,4-BENZOQUINOL METHYLASE, MITOCHONDRIAL"/>
    <property type="match status" value="1"/>
</dbReference>
<dbReference type="PANTHER" id="PTHR43591">
    <property type="entry name" value="METHYLTRANSFERASE"/>
    <property type="match status" value="1"/>
</dbReference>
<dbReference type="Pfam" id="PF01209">
    <property type="entry name" value="Ubie_methyltran"/>
    <property type="match status" value="1"/>
</dbReference>
<dbReference type="SUPFAM" id="SSF53335">
    <property type="entry name" value="S-adenosyl-L-methionine-dependent methyltransferases"/>
    <property type="match status" value="1"/>
</dbReference>
<dbReference type="PROSITE" id="PS51608">
    <property type="entry name" value="SAM_MT_UBIE"/>
    <property type="match status" value="1"/>
</dbReference>
<dbReference type="PROSITE" id="PS01183">
    <property type="entry name" value="UBIE_1"/>
    <property type="match status" value="1"/>
</dbReference>
<dbReference type="PROSITE" id="PS01184">
    <property type="entry name" value="UBIE_2"/>
    <property type="match status" value="1"/>
</dbReference>
<keyword id="KW-0474">Menaquinone biosynthesis</keyword>
<keyword id="KW-0489">Methyltransferase</keyword>
<keyword id="KW-0949">S-adenosyl-L-methionine</keyword>
<keyword id="KW-0808">Transferase</keyword>
<keyword id="KW-0831">Ubiquinone biosynthesis</keyword>
<evidence type="ECO:0000255" key="1">
    <source>
        <dbReference type="HAMAP-Rule" id="MF_01813"/>
    </source>
</evidence>
<organism>
    <name type="scientific">Pseudomonas aeruginosa (strain UCBPP-PA14)</name>
    <dbReference type="NCBI Taxonomy" id="208963"/>
    <lineage>
        <taxon>Bacteria</taxon>
        <taxon>Pseudomonadati</taxon>
        <taxon>Pseudomonadota</taxon>
        <taxon>Gammaproteobacteria</taxon>
        <taxon>Pseudomonadales</taxon>
        <taxon>Pseudomonadaceae</taxon>
        <taxon>Pseudomonas</taxon>
    </lineage>
</organism>
<reference key="1">
    <citation type="journal article" date="2006" name="Genome Biol.">
        <title>Genomic analysis reveals that Pseudomonas aeruginosa virulence is combinatorial.</title>
        <authorList>
            <person name="Lee D.G."/>
            <person name="Urbach J.M."/>
            <person name="Wu G."/>
            <person name="Liberati N.T."/>
            <person name="Feinbaum R.L."/>
            <person name="Miyata S."/>
            <person name="Diggins L.T."/>
            <person name="He J."/>
            <person name="Saucier M."/>
            <person name="Deziel E."/>
            <person name="Friedman L."/>
            <person name="Li L."/>
            <person name="Grills G."/>
            <person name="Montgomery K."/>
            <person name="Kucherlapati R."/>
            <person name="Rahme L.G."/>
            <person name="Ausubel F.M."/>
        </authorList>
    </citation>
    <scope>NUCLEOTIDE SEQUENCE [LARGE SCALE GENOMIC DNA]</scope>
    <source>
        <strain>UCBPP-PA14</strain>
    </source>
</reference>
<accession>Q02EV4</accession>
<comment type="function">
    <text evidence="1">Methyltransferase required for the conversion of demethylmenaquinol (DMKH2) to menaquinol (MKH2) and the conversion of 2-polyprenyl-6-methoxy-1,4-benzoquinol (DDMQH2) to 2-polyprenyl-3-methyl-6-methoxy-1,4-benzoquinol (DMQH2).</text>
</comment>
<comment type="catalytic activity">
    <reaction evidence="1">
        <text>a 2-demethylmenaquinol + S-adenosyl-L-methionine = a menaquinol + S-adenosyl-L-homocysteine + H(+)</text>
        <dbReference type="Rhea" id="RHEA:42640"/>
        <dbReference type="Rhea" id="RHEA-COMP:9539"/>
        <dbReference type="Rhea" id="RHEA-COMP:9563"/>
        <dbReference type="ChEBI" id="CHEBI:15378"/>
        <dbReference type="ChEBI" id="CHEBI:18151"/>
        <dbReference type="ChEBI" id="CHEBI:55437"/>
        <dbReference type="ChEBI" id="CHEBI:57856"/>
        <dbReference type="ChEBI" id="CHEBI:59789"/>
        <dbReference type="EC" id="2.1.1.163"/>
    </reaction>
</comment>
<comment type="catalytic activity">
    <reaction evidence="1">
        <text>a 2-methoxy-6-(all-trans-polyprenyl)benzene-1,4-diol + S-adenosyl-L-methionine = a 5-methoxy-2-methyl-3-(all-trans-polyprenyl)benzene-1,4-diol + S-adenosyl-L-homocysteine + H(+)</text>
        <dbReference type="Rhea" id="RHEA:28286"/>
        <dbReference type="Rhea" id="RHEA-COMP:10858"/>
        <dbReference type="Rhea" id="RHEA-COMP:10859"/>
        <dbReference type="ChEBI" id="CHEBI:15378"/>
        <dbReference type="ChEBI" id="CHEBI:57856"/>
        <dbReference type="ChEBI" id="CHEBI:59789"/>
        <dbReference type="ChEBI" id="CHEBI:84166"/>
        <dbReference type="ChEBI" id="CHEBI:84167"/>
        <dbReference type="EC" id="2.1.1.201"/>
    </reaction>
</comment>
<comment type="pathway">
    <text evidence="1">Quinol/quinone metabolism; menaquinone biosynthesis; menaquinol from 1,4-dihydroxy-2-naphthoate: step 2/2.</text>
</comment>
<comment type="pathway">
    <text evidence="1">Cofactor biosynthesis; ubiquinone biosynthesis.</text>
</comment>
<comment type="similarity">
    <text evidence="1">Belongs to the class I-like SAM-binding methyltransferase superfamily. MenG/UbiE family.</text>
</comment>
<feature type="chain" id="PRO_1000056272" description="Ubiquinone/menaquinone biosynthesis C-methyltransferase UbiE">
    <location>
        <begin position="1"/>
        <end position="256"/>
    </location>
</feature>
<feature type="binding site" evidence="1">
    <location>
        <position position="79"/>
    </location>
    <ligand>
        <name>S-adenosyl-L-methionine</name>
        <dbReference type="ChEBI" id="CHEBI:59789"/>
    </ligand>
</feature>
<feature type="binding site" evidence="1">
    <location>
        <position position="100"/>
    </location>
    <ligand>
        <name>S-adenosyl-L-methionine</name>
        <dbReference type="ChEBI" id="CHEBI:59789"/>
    </ligand>
</feature>
<feature type="binding site" evidence="1">
    <location>
        <begin position="128"/>
        <end position="129"/>
    </location>
    <ligand>
        <name>S-adenosyl-L-methionine</name>
        <dbReference type="ChEBI" id="CHEBI:59789"/>
    </ligand>
</feature>
<proteinExistence type="inferred from homology"/>
<protein>
    <recommendedName>
        <fullName evidence="1">Ubiquinone/menaquinone biosynthesis C-methyltransferase UbiE</fullName>
        <ecNumber evidence="1">2.1.1.163</ecNumber>
        <ecNumber evidence="1">2.1.1.201</ecNumber>
    </recommendedName>
    <alternativeName>
        <fullName evidence="1">2-methoxy-6-polyprenyl-1,4-benzoquinol methylase</fullName>
    </alternativeName>
    <alternativeName>
        <fullName evidence="1">Demethylmenaquinone methyltransferase</fullName>
    </alternativeName>
</protein>
<name>UBIE_PSEAB</name>